<evidence type="ECO:0000250" key="1"/>
<evidence type="ECO:0000250" key="2">
    <source>
        <dbReference type="UniProtKB" id="Q20374"/>
    </source>
</evidence>
<evidence type="ECO:0000256" key="3">
    <source>
        <dbReference type="SAM" id="MobiDB-lite"/>
    </source>
</evidence>
<evidence type="ECO:0000305" key="4"/>
<accession>A8WSQ9</accession>
<feature type="chain" id="PRO_0000404581" description="Protein PAT1 homolog 1">
    <location>
        <begin position="1"/>
        <end position="864"/>
    </location>
</feature>
<feature type="region of interest" description="Disordered" evidence="3">
    <location>
        <begin position="427"/>
        <end position="460"/>
    </location>
</feature>
<feature type="region of interest" description="Disordered" evidence="3">
    <location>
        <begin position="518"/>
        <end position="539"/>
    </location>
</feature>
<feature type="region of interest" description="Disordered" evidence="3">
    <location>
        <begin position="551"/>
        <end position="602"/>
    </location>
</feature>
<feature type="compositionally biased region" description="Polar residues" evidence="3">
    <location>
        <begin position="427"/>
        <end position="439"/>
    </location>
</feature>
<feature type="compositionally biased region" description="Basic and acidic residues" evidence="3">
    <location>
        <begin position="551"/>
        <end position="580"/>
    </location>
</feature>
<organism>
    <name type="scientific">Caenorhabditis briggsae</name>
    <dbReference type="NCBI Taxonomy" id="6238"/>
    <lineage>
        <taxon>Eukaryota</taxon>
        <taxon>Metazoa</taxon>
        <taxon>Ecdysozoa</taxon>
        <taxon>Nematoda</taxon>
        <taxon>Chromadorea</taxon>
        <taxon>Rhabditida</taxon>
        <taxon>Rhabditina</taxon>
        <taxon>Rhabditomorpha</taxon>
        <taxon>Rhabditoidea</taxon>
        <taxon>Rhabditidae</taxon>
        <taxon>Peloderinae</taxon>
        <taxon>Caenorhabditis</taxon>
    </lineage>
</organism>
<comment type="function">
    <text evidence="1 2">RNA-binding protein involved in deadenylation-dependent decapping of mRNAs, leading to the degradation of mRNAs. Acts as a scaffold protein that connects deadenylation and decapping machinery (By similarity). Required for the recruitment of P-body components such as cgh-1 in somatic blastomeres (By similarity). May play a role in recruiting the decapping enzyme dcap-1 to cytoplasmic puncta in the cell body of the posterior touch receptor neuron, PLM (By similarity).</text>
</comment>
<comment type="subcellular location">
    <subcellularLocation>
        <location evidence="1">Cytoplasm</location>
        <location evidence="1">P-body</location>
    </subcellularLocation>
</comment>
<comment type="similarity">
    <text evidence="4">Belongs to the PAT1 family.</text>
</comment>
<name>PATR1_CAEBR</name>
<gene>
    <name type="primary">patr-1</name>
    <name type="ORF">CBG03125</name>
</gene>
<dbReference type="EMBL" id="HE601438">
    <property type="protein sequence ID" value="CAP23518.2"/>
    <property type="molecule type" value="Genomic_DNA"/>
</dbReference>
<dbReference type="SMR" id="A8WSQ9"/>
<dbReference type="FunCoup" id="A8WSQ9">
    <property type="interactions" value="1717"/>
</dbReference>
<dbReference type="STRING" id="6238.A8WSQ9"/>
<dbReference type="WormBase" id="CBG03125">
    <property type="protein sequence ID" value="CBP14509"/>
    <property type="gene ID" value="WBGene00026051"/>
    <property type="gene designation" value="Cbr-patr-1"/>
</dbReference>
<dbReference type="eggNOG" id="KOG4592">
    <property type="taxonomic scope" value="Eukaryota"/>
</dbReference>
<dbReference type="HOGENOM" id="CLU_363404_0_0_1"/>
<dbReference type="InParanoid" id="A8WSQ9"/>
<dbReference type="OMA" id="STHNPRH"/>
<dbReference type="Proteomes" id="UP000008549">
    <property type="component" value="Unassembled WGS sequence"/>
</dbReference>
<dbReference type="GO" id="GO:0000932">
    <property type="term" value="C:P-body"/>
    <property type="evidence" value="ECO:0000318"/>
    <property type="project" value="GO_Central"/>
</dbReference>
<dbReference type="GO" id="GO:0003723">
    <property type="term" value="F:RNA binding"/>
    <property type="evidence" value="ECO:0000318"/>
    <property type="project" value="GO_Central"/>
</dbReference>
<dbReference type="GO" id="GO:0000290">
    <property type="term" value="P:deadenylation-dependent decapping of nuclear-transcribed mRNA"/>
    <property type="evidence" value="ECO:0000318"/>
    <property type="project" value="GO_Central"/>
</dbReference>
<dbReference type="GO" id="GO:0033962">
    <property type="term" value="P:P-body assembly"/>
    <property type="evidence" value="ECO:0000318"/>
    <property type="project" value="GO_Central"/>
</dbReference>
<dbReference type="InterPro" id="IPR039900">
    <property type="entry name" value="Pat1-like"/>
</dbReference>
<dbReference type="PANTHER" id="PTHR21551:SF0">
    <property type="entry name" value="PROTEIN ASSOCIATED WITH TOPO II RELATED-1, ISOFORM A"/>
    <property type="match status" value="1"/>
</dbReference>
<dbReference type="PANTHER" id="PTHR21551">
    <property type="entry name" value="TOPOISOMERASE II-ASSOCIATED PROTEIN PAT1"/>
    <property type="match status" value="1"/>
</dbReference>
<proteinExistence type="inferred from homology"/>
<reference key="1">
    <citation type="journal article" date="2003" name="PLoS Biol.">
        <title>The genome sequence of Caenorhabditis briggsae: a platform for comparative genomics.</title>
        <authorList>
            <person name="Stein L.D."/>
            <person name="Bao Z."/>
            <person name="Blasiar D."/>
            <person name="Blumenthal T."/>
            <person name="Brent M.R."/>
            <person name="Chen N."/>
            <person name="Chinwalla A."/>
            <person name="Clarke L."/>
            <person name="Clee C."/>
            <person name="Coghlan A."/>
            <person name="Coulson A."/>
            <person name="D'Eustachio P."/>
            <person name="Fitch D.H.A."/>
            <person name="Fulton L.A."/>
            <person name="Fulton R.E."/>
            <person name="Griffiths-Jones S."/>
            <person name="Harris T.W."/>
            <person name="Hillier L.W."/>
            <person name="Kamath R."/>
            <person name="Kuwabara P.E."/>
            <person name="Mardis E.R."/>
            <person name="Marra M.A."/>
            <person name="Miner T.L."/>
            <person name="Minx P."/>
            <person name="Mullikin J.C."/>
            <person name="Plumb R.W."/>
            <person name="Rogers J."/>
            <person name="Schein J.E."/>
            <person name="Sohrmann M."/>
            <person name="Spieth J."/>
            <person name="Stajich J.E."/>
            <person name="Wei C."/>
            <person name="Willey D."/>
            <person name="Wilson R.K."/>
            <person name="Durbin R.M."/>
            <person name="Waterston R.H."/>
        </authorList>
    </citation>
    <scope>NUCLEOTIDE SEQUENCE [LARGE SCALE GENOMIC DNA]</scope>
    <source>
        <strain>AF16</strain>
    </source>
</reference>
<keyword id="KW-0963">Cytoplasm</keyword>
<keyword id="KW-1185">Reference proteome</keyword>
<keyword id="KW-0694">RNA-binding</keyword>
<sequence length="864" mass="97193">MDEVKKYGKTLEEIEGELMFGKISFMLFLFHCIFSDDFPESLADSDEEHNIFDDEFDAANDETFGGGLDNIGENAEQVNCLVRAYHSLFFQTARLRLDDPVWHHPSSSDQVAPDASAIPFPTFGNGDSSDTFKSSFEAESPFLKKSIWGNGADSSFNIWGSDFGIAAVPPSSSFDLDYNSIAPNEAQQVSPLVQQKPSSQIPSMPSSALTVTCLLYHEFLNLISFKLEDFERMQLGDSTDTLTAALNDLQLGSTNAQSKIEQAPTTLQSAPGEPLKAQTLPKLPVSALSLEELEQKIIRESQTVNVANTQQTPQGSNRFAHPPPGFTANMKNAQHPAMGPPMGMPGMQMPPPPMGYQQMGAIMQELPRLPPLNPQYLPLVPIWLGAIVNNMQLPMGVPPIPPFLYQLLNHYRNPSLVHAMIVHSSIPPNSRPNGPQFSGPQVGPHSPGARGQQRRNSGMPSTRTIYDLALDSFAGYMSFKEREWLIRIQFVQCKGSGDPCIDDYYYVRWRESQIANGWTAHPKPESKQPLPASSESRKDYLERIRRMNYREMQKERLRDREKERQRERQERIDRGEERKPRQTLTDKFATSLGLPSKSSTHNPRHVLDMKAQVDSVDNQAKKLSDEERKNAVQKKLRTMLLRLEGALVLLMEAEELRRTSSSDKSQFKDLTSEEKEQEVEKRTSLIIDEFMGDDLPKLMQMSKGRAVLTRTLKVVGPRDQARIILSLMIAAGLVSKKMYGEIVLDILPVVHQKVSNLHPDQFKYLVGALNLDNIKRQLMDSNMFVRDVMLTLYLVSVKNNQNLLEWSKQTKFSSLKMPSSAPLGFWRKALSAVTDAEITEFAEDIKYSGVVDCHEVAKLIEQSL</sequence>
<protein>
    <recommendedName>
        <fullName>Protein PAT1 homolog 1</fullName>
    </recommendedName>
</protein>